<evidence type="ECO:0000255" key="1">
    <source>
        <dbReference type="HAMAP-Rule" id="MF_01719"/>
    </source>
</evidence>
<evidence type="ECO:0000305" key="2"/>
<feature type="chain" id="PRO_0000270433" description="Methionine import ATP-binding protein MetN">
    <location>
        <begin position="1"/>
        <end position="321"/>
    </location>
</feature>
<feature type="domain" description="ABC transporter" evidence="1">
    <location>
        <begin position="2"/>
        <end position="241"/>
    </location>
</feature>
<feature type="binding site" evidence="1">
    <location>
        <begin position="38"/>
        <end position="45"/>
    </location>
    <ligand>
        <name>ATP</name>
        <dbReference type="ChEBI" id="CHEBI:30616"/>
    </ligand>
</feature>
<protein>
    <recommendedName>
        <fullName evidence="1">Methionine import ATP-binding protein MetN</fullName>
        <ecNumber evidence="1">7.4.2.11</ecNumber>
    </recommendedName>
</protein>
<name>METN_THEFY</name>
<organism>
    <name type="scientific">Thermobifida fusca (strain YX)</name>
    <dbReference type="NCBI Taxonomy" id="269800"/>
    <lineage>
        <taxon>Bacteria</taxon>
        <taxon>Bacillati</taxon>
        <taxon>Actinomycetota</taxon>
        <taxon>Actinomycetes</taxon>
        <taxon>Streptosporangiales</taxon>
        <taxon>Nocardiopsidaceae</taxon>
        <taxon>Thermobifida</taxon>
    </lineage>
</organism>
<accession>Q47RE8</accession>
<dbReference type="EC" id="7.4.2.11" evidence="1"/>
<dbReference type="EMBL" id="CP000088">
    <property type="protein sequence ID" value="AAZ54969.1"/>
    <property type="status" value="ALT_INIT"/>
    <property type="molecule type" value="Genomic_DNA"/>
</dbReference>
<dbReference type="SMR" id="Q47RE8"/>
<dbReference type="STRING" id="269800.Tfu_0931"/>
<dbReference type="KEGG" id="tfu:Tfu_0931"/>
<dbReference type="eggNOG" id="COG1135">
    <property type="taxonomic scope" value="Bacteria"/>
</dbReference>
<dbReference type="HOGENOM" id="CLU_000604_1_3_11"/>
<dbReference type="GO" id="GO:0005886">
    <property type="term" value="C:plasma membrane"/>
    <property type="evidence" value="ECO:0007669"/>
    <property type="project" value="UniProtKB-SubCell"/>
</dbReference>
<dbReference type="GO" id="GO:0033232">
    <property type="term" value="F:ABC-type D-methionine transporter activity"/>
    <property type="evidence" value="ECO:0007669"/>
    <property type="project" value="UniProtKB-EC"/>
</dbReference>
<dbReference type="GO" id="GO:0005524">
    <property type="term" value="F:ATP binding"/>
    <property type="evidence" value="ECO:0007669"/>
    <property type="project" value="UniProtKB-KW"/>
</dbReference>
<dbReference type="GO" id="GO:0016887">
    <property type="term" value="F:ATP hydrolysis activity"/>
    <property type="evidence" value="ECO:0007669"/>
    <property type="project" value="InterPro"/>
</dbReference>
<dbReference type="CDD" id="cd03258">
    <property type="entry name" value="ABC_MetN_methionine_transporter"/>
    <property type="match status" value="1"/>
</dbReference>
<dbReference type="FunFam" id="3.40.50.300:FF:000056">
    <property type="entry name" value="Cell division ATP-binding protein FtsE"/>
    <property type="match status" value="1"/>
</dbReference>
<dbReference type="Gene3D" id="3.30.70.260">
    <property type="match status" value="1"/>
</dbReference>
<dbReference type="Gene3D" id="3.40.50.300">
    <property type="entry name" value="P-loop containing nucleotide triphosphate hydrolases"/>
    <property type="match status" value="1"/>
</dbReference>
<dbReference type="InterPro" id="IPR003593">
    <property type="entry name" value="AAA+_ATPase"/>
</dbReference>
<dbReference type="InterPro" id="IPR003439">
    <property type="entry name" value="ABC_transporter-like_ATP-bd"/>
</dbReference>
<dbReference type="InterPro" id="IPR017871">
    <property type="entry name" value="ABC_transporter-like_CS"/>
</dbReference>
<dbReference type="InterPro" id="IPR045865">
    <property type="entry name" value="ACT-like_dom_sf"/>
</dbReference>
<dbReference type="InterPro" id="IPR041701">
    <property type="entry name" value="MetN_ABC"/>
</dbReference>
<dbReference type="InterPro" id="IPR050086">
    <property type="entry name" value="MetN_ABC_transporter-like"/>
</dbReference>
<dbReference type="InterPro" id="IPR018449">
    <property type="entry name" value="NIL_domain"/>
</dbReference>
<dbReference type="InterPro" id="IPR027417">
    <property type="entry name" value="P-loop_NTPase"/>
</dbReference>
<dbReference type="PANTHER" id="PTHR43166">
    <property type="entry name" value="AMINO ACID IMPORT ATP-BINDING PROTEIN"/>
    <property type="match status" value="1"/>
</dbReference>
<dbReference type="PANTHER" id="PTHR43166:SF30">
    <property type="entry name" value="METHIONINE IMPORT ATP-BINDING PROTEIN METN"/>
    <property type="match status" value="1"/>
</dbReference>
<dbReference type="Pfam" id="PF00005">
    <property type="entry name" value="ABC_tran"/>
    <property type="match status" value="1"/>
</dbReference>
<dbReference type="Pfam" id="PF09383">
    <property type="entry name" value="NIL"/>
    <property type="match status" value="1"/>
</dbReference>
<dbReference type="SMART" id="SM00382">
    <property type="entry name" value="AAA"/>
    <property type="match status" value="1"/>
</dbReference>
<dbReference type="SMART" id="SM00930">
    <property type="entry name" value="NIL"/>
    <property type="match status" value="1"/>
</dbReference>
<dbReference type="SUPFAM" id="SSF55021">
    <property type="entry name" value="ACT-like"/>
    <property type="match status" value="1"/>
</dbReference>
<dbReference type="SUPFAM" id="SSF52540">
    <property type="entry name" value="P-loop containing nucleoside triphosphate hydrolases"/>
    <property type="match status" value="1"/>
</dbReference>
<dbReference type="PROSITE" id="PS00211">
    <property type="entry name" value="ABC_TRANSPORTER_1"/>
    <property type="match status" value="1"/>
</dbReference>
<dbReference type="PROSITE" id="PS50893">
    <property type="entry name" value="ABC_TRANSPORTER_2"/>
    <property type="match status" value="1"/>
</dbReference>
<dbReference type="PROSITE" id="PS51264">
    <property type="entry name" value="METN"/>
    <property type="match status" value="1"/>
</dbReference>
<gene>
    <name evidence="1" type="primary">metN</name>
    <name type="ordered locus">Tfu_0931</name>
</gene>
<comment type="function">
    <text evidence="1">Part of the ABC transporter complex MetNIQ involved in methionine import. Responsible for energy coupling to the transport system.</text>
</comment>
<comment type="catalytic activity">
    <reaction evidence="1">
        <text>L-methionine(out) + ATP + H2O = L-methionine(in) + ADP + phosphate + H(+)</text>
        <dbReference type="Rhea" id="RHEA:29779"/>
        <dbReference type="ChEBI" id="CHEBI:15377"/>
        <dbReference type="ChEBI" id="CHEBI:15378"/>
        <dbReference type="ChEBI" id="CHEBI:30616"/>
        <dbReference type="ChEBI" id="CHEBI:43474"/>
        <dbReference type="ChEBI" id="CHEBI:57844"/>
        <dbReference type="ChEBI" id="CHEBI:456216"/>
        <dbReference type="EC" id="7.4.2.11"/>
    </reaction>
</comment>
<comment type="catalytic activity">
    <reaction evidence="1">
        <text>D-methionine(out) + ATP + H2O = D-methionine(in) + ADP + phosphate + H(+)</text>
        <dbReference type="Rhea" id="RHEA:29767"/>
        <dbReference type="ChEBI" id="CHEBI:15377"/>
        <dbReference type="ChEBI" id="CHEBI:15378"/>
        <dbReference type="ChEBI" id="CHEBI:30616"/>
        <dbReference type="ChEBI" id="CHEBI:43474"/>
        <dbReference type="ChEBI" id="CHEBI:57932"/>
        <dbReference type="ChEBI" id="CHEBI:456216"/>
        <dbReference type="EC" id="7.4.2.11"/>
    </reaction>
</comment>
<comment type="subunit">
    <text evidence="1">The complex is composed of two ATP-binding proteins (MetN), two transmembrane proteins (MetI) and a solute-binding protein (MetQ).</text>
</comment>
<comment type="subcellular location">
    <subcellularLocation>
        <location evidence="1">Cell membrane</location>
        <topology evidence="1">Peripheral membrane protein</topology>
    </subcellularLocation>
</comment>
<comment type="similarity">
    <text evidence="1">Belongs to the ABC transporter superfamily. Methionine importer (TC 3.A.1.24) family.</text>
</comment>
<comment type="sequence caution" evidence="2">
    <conflict type="erroneous initiation">
        <sequence resource="EMBL-CDS" id="AAZ54969"/>
    </conflict>
</comment>
<keyword id="KW-0029">Amino-acid transport</keyword>
<keyword id="KW-0067">ATP-binding</keyword>
<keyword id="KW-1003">Cell membrane</keyword>
<keyword id="KW-0472">Membrane</keyword>
<keyword id="KW-0547">Nucleotide-binding</keyword>
<keyword id="KW-1278">Translocase</keyword>
<keyword id="KW-0813">Transport</keyword>
<reference key="1">
    <citation type="journal article" date="2007" name="J. Bacteriol.">
        <title>Genome sequence and analysis of the soil cellulolytic actinomycete Thermobifida fusca YX.</title>
        <authorList>
            <person name="Lykidis A."/>
            <person name="Mavromatis K."/>
            <person name="Ivanova N."/>
            <person name="Anderson I."/>
            <person name="Land M."/>
            <person name="DiBartolo G."/>
            <person name="Martinez M."/>
            <person name="Lapidus A."/>
            <person name="Lucas S."/>
            <person name="Copeland A."/>
            <person name="Richardson P."/>
            <person name="Wilson D.B."/>
            <person name="Kyrpides N."/>
        </authorList>
    </citation>
    <scope>NUCLEOTIDE SEQUENCE [LARGE SCALE GENOMIC DNA]</scope>
    <source>
        <strain>YX</strain>
    </source>
</reference>
<proteinExistence type="inferred from homology"/>
<sequence>MINAVDLHKVYQLKGREVVALRGVSLHVPQGEIYGVVGPSGAGKSTLLRCINLLERPDRGEIWVDGRNLTALPPPQLRAARRGIGMIHQHFALLSSRTVAGNVAFPLEIAGVPRAERRRRVAELLELVGLADKAAAYPAQLSGGQKQRVGIARALAPRPTVLLSDEATSALDPATTASILDLLRDLNRELGLTILLITHEMDVVKRICDAVAIMDRGSVVETGRTVDLLRTPGSLLARSLFAPPPVSGDGVVTLTWVDQAEEPLISQLTRLFDVDVSILGGALEEVAGHAVGRLTVRITGERSAEALTYLTDRNVLVEEVP</sequence>